<organism>
    <name type="scientific">African swine fever virus (isolate Tick/South Africa/Pretoriuskop Pr4/1996)</name>
    <name type="common">ASFV</name>
    <dbReference type="NCBI Taxonomy" id="561443"/>
    <lineage>
        <taxon>Viruses</taxon>
        <taxon>Varidnaviria</taxon>
        <taxon>Bamfordvirae</taxon>
        <taxon>Nucleocytoviricota</taxon>
        <taxon>Pokkesviricetes</taxon>
        <taxon>Asfuvirales</taxon>
        <taxon>Asfarviridae</taxon>
        <taxon>Asfivirus</taxon>
        <taxon>African swine fever virus</taxon>
    </lineage>
</organism>
<gene>
    <name type="ordered locus">Pret-168</name>
</gene>
<keyword id="KW-0244">Early protein</keyword>
<keyword id="KW-1032">Host cell membrane</keyword>
<keyword id="KW-1043">Host membrane</keyword>
<keyword id="KW-0472">Membrane</keyword>
<keyword id="KW-0812">Transmembrane</keyword>
<keyword id="KW-1133">Transmembrane helix</keyword>
<keyword id="KW-0946">Virion</keyword>
<dbReference type="EMBL" id="AY261363">
    <property type="status" value="NOT_ANNOTATED_CDS"/>
    <property type="molecule type" value="Genomic_DNA"/>
</dbReference>
<dbReference type="Proteomes" id="UP000000859">
    <property type="component" value="Segment"/>
</dbReference>
<dbReference type="GO" id="GO:0020002">
    <property type="term" value="C:host cell plasma membrane"/>
    <property type="evidence" value="ECO:0007669"/>
    <property type="project" value="UniProtKB-SubCell"/>
</dbReference>
<dbReference type="GO" id="GO:0016020">
    <property type="term" value="C:membrane"/>
    <property type="evidence" value="ECO:0007669"/>
    <property type="project" value="UniProtKB-KW"/>
</dbReference>
<dbReference type="GO" id="GO:0055036">
    <property type="term" value="C:virion membrane"/>
    <property type="evidence" value="ECO:0007669"/>
    <property type="project" value="UniProtKB-SubCell"/>
</dbReference>
<proteinExistence type="evidence at transcript level"/>
<comment type="subcellular location">
    <subcellularLocation>
        <location>Virion membrane</location>
        <topology>Single-pass membrane protein</topology>
    </subcellularLocation>
    <subcellularLocation>
        <location evidence="1">Host cell membrane</location>
        <topology evidence="1">Single-pass membrane protein</topology>
    </subcellularLocation>
</comment>
<comment type="induction">
    <text>Early structural protein.</text>
</comment>
<comment type="similarity">
    <text evidence="3">Belongs to the asfivirus envelope protein p22 family.</text>
</comment>
<organismHost>
    <name type="scientific">Ornithodoros</name>
    <name type="common">relapsing fever ticks</name>
    <dbReference type="NCBI Taxonomy" id="6937"/>
</organismHost>
<organismHost>
    <name type="scientific">Phacochoerus aethiopicus</name>
    <name type="common">Warthog</name>
    <dbReference type="NCBI Taxonomy" id="85517"/>
</organismHost>
<organismHost>
    <name type="scientific">Phacochoerus africanus</name>
    <name type="common">Warthog</name>
    <dbReference type="NCBI Taxonomy" id="41426"/>
</organismHost>
<organismHost>
    <name type="scientific">Potamochoerus larvatus</name>
    <name type="common">Bushpig</name>
    <dbReference type="NCBI Taxonomy" id="273792"/>
</organismHost>
<organismHost>
    <name type="scientific">Sus scrofa</name>
    <name type="common">Pig</name>
    <dbReference type="NCBI Taxonomy" id="9823"/>
</organismHost>
<feature type="chain" id="PRO_0000373373" description="Envelope protein 168">
    <location>
        <begin position="1"/>
        <end position="170"/>
    </location>
</feature>
<feature type="topological domain" description="Intravirion" evidence="2">
    <location>
        <position position="1"/>
    </location>
</feature>
<feature type="transmembrane region" description="Helical" evidence="2">
    <location>
        <begin position="2"/>
        <end position="22"/>
    </location>
</feature>
<feature type="topological domain" description="Virion surface" evidence="2">
    <location>
        <begin position="23"/>
        <end position="170"/>
    </location>
</feature>
<evidence type="ECO:0000250" key="1"/>
<evidence type="ECO:0000255" key="2"/>
<evidence type="ECO:0000305" key="3"/>
<name>EV168_ASFP4</name>
<sequence length="170" mass="19287">MFYPVVQILIGIILVIILILGFYHLKRKPPKKKCKTDTDCKDKGHHCVRGACTDKSCLEAVKQDIKDIKLDPTIRSCDYAPGFYRFNATTADLQSPFGKTRIDLGKVWTTWSKEDEYCQSLCLQHKGSIGWEFDEMSLRGEGNCYCYTNSHPALKNSNNTTVMGIARNVL</sequence>
<accession>P0C9W9</accession>
<reference key="1">
    <citation type="submission" date="2003-03" db="EMBL/GenBank/DDBJ databases">
        <title>African swine fever virus genomes.</title>
        <authorList>
            <person name="Kutish G.F."/>
            <person name="Rock D.L."/>
        </authorList>
    </citation>
    <scope>NUCLEOTIDE SEQUENCE [LARGE SCALE GENOMIC DNA]</scope>
</reference>
<protein>
    <recommendedName>
        <fullName>Envelope protein 168</fullName>
    </recommendedName>
</protein>